<organism>
    <name type="scientific">Burkholderia pseudomallei (strain 1106a)</name>
    <dbReference type="NCBI Taxonomy" id="357348"/>
    <lineage>
        <taxon>Bacteria</taxon>
        <taxon>Pseudomonadati</taxon>
        <taxon>Pseudomonadota</taxon>
        <taxon>Betaproteobacteria</taxon>
        <taxon>Burkholderiales</taxon>
        <taxon>Burkholderiaceae</taxon>
        <taxon>Burkholderia</taxon>
        <taxon>pseudomallei group</taxon>
    </lineage>
</organism>
<protein>
    <recommendedName>
        <fullName evidence="1">UDP-3-O-acylglucosamine N-acyltransferase</fullName>
        <ecNumber evidence="1">2.3.1.191</ecNumber>
    </recommendedName>
</protein>
<dbReference type="EC" id="2.3.1.191" evidence="1"/>
<dbReference type="EMBL" id="CP000572">
    <property type="protein sequence ID" value="ABN90404.1"/>
    <property type="molecule type" value="Genomic_DNA"/>
</dbReference>
<dbReference type="RefSeq" id="WP_004191858.1">
    <property type="nucleotide sequence ID" value="NC_009076.1"/>
</dbReference>
<dbReference type="SMR" id="A3NWM0"/>
<dbReference type="GeneID" id="93060690"/>
<dbReference type="KEGG" id="bpl:BURPS1106A_2482"/>
<dbReference type="HOGENOM" id="CLU_049865_0_1_4"/>
<dbReference type="UniPathway" id="UPA00973"/>
<dbReference type="Proteomes" id="UP000006738">
    <property type="component" value="Chromosome I"/>
</dbReference>
<dbReference type="GO" id="GO:0016020">
    <property type="term" value="C:membrane"/>
    <property type="evidence" value="ECO:0007669"/>
    <property type="project" value="GOC"/>
</dbReference>
<dbReference type="GO" id="GO:0016410">
    <property type="term" value="F:N-acyltransferase activity"/>
    <property type="evidence" value="ECO:0007669"/>
    <property type="project" value="InterPro"/>
</dbReference>
<dbReference type="GO" id="GO:0009245">
    <property type="term" value="P:lipid A biosynthetic process"/>
    <property type="evidence" value="ECO:0007669"/>
    <property type="project" value="UniProtKB-UniRule"/>
</dbReference>
<dbReference type="CDD" id="cd03352">
    <property type="entry name" value="LbH_LpxD"/>
    <property type="match status" value="1"/>
</dbReference>
<dbReference type="Gene3D" id="2.160.10.10">
    <property type="entry name" value="Hexapeptide repeat proteins"/>
    <property type="match status" value="1"/>
</dbReference>
<dbReference type="Gene3D" id="3.40.1390.10">
    <property type="entry name" value="MurE/MurF, N-terminal domain"/>
    <property type="match status" value="1"/>
</dbReference>
<dbReference type="HAMAP" id="MF_00523">
    <property type="entry name" value="LpxD"/>
    <property type="match status" value="1"/>
</dbReference>
<dbReference type="InterPro" id="IPR001451">
    <property type="entry name" value="Hexapep"/>
</dbReference>
<dbReference type="InterPro" id="IPR018357">
    <property type="entry name" value="Hexapep_transf_CS"/>
</dbReference>
<dbReference type="InterPro" id="IPR007691">
    <property type="entry name" value="LpxD"/>
</dbReference>
<dbReference type="InterPro" id="IPR011004">
    <property type="entry name" value="Trimer_LpxA-like_sf"/>
</dbReference>
<dbReference type="InterPro" id="IPR020573">
    <property type="entry name" value="UDP_GlcNAc_AcTrfase_non-rep"/>
</dbReference>
<dbReference type="NCBIfam" id="TIGR01853">
    <property type="entry name" value="lipid_A_lpxD"/>
    <property type="match status" value="1"/>
</dbReference>
<dbReference type="NCBIfam" id="NF002060">
    <property type="entry name" value="PRK00892.1"/>
    <property type="match status" value="1"/>
</dbReference>
<dbReference type="PANTHER" id="PTHR43378">
    <property type="entry name" value="UDP-3-O-ACYLGLUCOSAMINE N-ACYLTRANSFERASE"/>
    <property type="match status" value="1"/>
</dbReference>
<dbReference type="PANTHER" id="PTHR43378:SF2">
    <property type="entry name" value="UDP-3-O-ACYLGLUCOSAMINE N-ACYLTRANSFERASE 1, MITOCHONDRIAL-RELATED"/>
    <property type="match status" value="1"/>
</dbReference>
<dbReference type="Pfam" id="PF00132">
    <property type="entry name" value="Hexapep"/>
    <property type="match status" value="2"/>
</dbReference>
<dbReference type="Pfam" id="PF14602">
    <property type="entry name" value="Hexapep_2"/>
    <property type="match status" value="1"/>
</dbReference>
<dbReference type="Pfam" id="PF04613">
    <property type="entry name" value="LpxD"/>
    <property type="match status" value="1"/>
</dbReference>
<dbReference type="SUPFAM" id="SSF51161">
    <property type="entry name" value="Trimeric LpxA-like enzymes"/>
    <property type="match status" value="1"/>
</dbReference>
<dbReference type="PROSITE" id="PS00101">
    <property type="entry name" value="HEXAPEP_TRANSFERASES"/>
    <property type="match status" value="3"/>
</dbReference>
<accession>A3NWM0</accession>
<reference key="1">
    <citation type="journal article" date="2010" name="Genome Biol. Evol.">
        <title>Continuing evolution of Burkholderia mallei through genome reduction and large-scale rearrangements.</title>
        <authorList>
            <person name="Losada L."/>
            <person name="Ronning C.M."/>
            <person name="DeShazer D."/>
            <person name="Woods D."/>
            <person name="Fedorova N."/>
            <person name="Kim H.S."/>
            <person name="Shabalina S.A."/>
            <person name="Pearson T.R."/>
            <person name="Brinkac L."/>
            <person name="Tan P."/>
            <person name="Nandi T."/>
            <person name="Crabtree J."/>
            <person name="Badger J."/>
            <person name="Beckstrom-Sternberg S."/>
            <person name="Saqib M."/>
            <person name="Schutzer S.E."/>
            <person name="Keim P."/>
            <person name="Nierman W.C."/>
        </authorList>
    </citation>
    <scope>NUCLEOTIDE SEQUENCE [LARGE SCALE GENOMIC DNA]</scope>
    <source>
        <strain>1106a</strain>
    </source>
</reference>
<comment type="function">
    <text evidence="1">Catalyzes the N-acylation of UDP-3-O-acylglucosamine using 3-hydroxyacyl-ACP as the acyl donor. Is involved in the biosynthesis of lipid A, a phosphorylated glycolipid that anchors the lipopolysaccharide to the outer membrane of the cell.</text>
</comment>
<comment type="catalytic activity">
    <reaction evidence="1">
        <text>a UDP-3-O-[(3R)-3-hydroxyacyl]-alpha-D-glucosamine + a (3R)-hydroxyacyl-[ACP] = a UDP-2-N,3-O-bis[(3R)-3-hydroxyacyl]-alpha-D-glucosamine + holo-[ACP] + H(+)</text>
        <dbReference type="Rhea" id="RHEA:53836"/>
        <dbReference type="Rhea" id="RHEA-COMP:9685"/>
        <dbReference type="Rhea" id="RHEA-COMP:9945"/>
        <dbReference type="ChEBI" id="CHEBI:15378"/>
        <dbReference type="ChEBI" id="CHEBI:64479"/>
        <dbReference type="ChEBI" id="CHEBI:78827"/>
        <dbReference type="ChEBI" id="CHEBI:137740"/>
        <dbReference type="ChEBI" id="CHEBI:137748"/>
        <dbReference type="EC" id="2.3.1.191"/>
    </reaction>
</comment>
<comment type="pathway">
    <text evidence="1">Bacterial outer membrane biogenesis; LPS lipid A biosynthesis.</text>
</comment>
<comment type="subunit">
    <text evidence="1">Homotrimer.</text>
</comment>
<comment type="similarity">
    <text evidence="1">Belongs to the transferase hexapeptide repeat family. LpxD subfamily.</text>
</comment>
<sequence length="361" mass="36796">MALTLEALAARFGGEIVGDGRCEVGALAPLDQAGPRQLAFLANPKYLAQVETTGAGAVLIAPGDLEKLGAAAHGRNFIVTPNPYAYFARVAQMFIDLAAPPRAAGVHPSATIDPAAQVAASAVIGPHVTVEAGAVIGERAQLDANVFVGRGTRIGDDSHLYPNVAIYHGCTLGPRAIVHSGAVIGSDGFGFAPDFVGEGDARTGAWVKIPQVGGVKVGPDVEIGANTTIDRGAMADTVIDECVKIDNLVQIGHNCRIGAYTVIAGCAGIAGSTTIGKHCMIGGAVGIAGHVTLGDYVIVTAKSGVSKSLPKAGIYTSAFPAVEHGDWNRSAALVRNLDKLRDRIKALETALVAREGDAGGA</sequence>
<proteinExistence type="inferred from homology"/>
<evidence type="ECO:0000255" key="1">
    <source>
        <dbReference type="HAMAP-Rule" id="MF_00523"/>
    </source>
</evidence>
<gene>
    <name evidence="1" type="primary">lpxD</name>
    <name type="ordered locus">BURPS1106A_2482</name>
</gene>
<keyword id="KW-0012">Acyltransferase</keyword>
<keyword id="KW-0441">Lipid A biosynthesis</keyword>
<keyword id="KW-0444">Lipid biosynthesis</keyword>
<keyword id="KW-0443">Lipid metabolism</keyword>
<keyword id="KW-0677">Repeat</keyword>
<keyword id="KW-0808">Transferase</keyword>
<feature type="chain" id="PRO_1000050934" description="UDP-3-O-acylglucosamine N-acyltransferase">
    <location>
        <begin position="1"/>
        <end position="361"/>
    </location>
</feature>
<feature type="active site" description="Proton acceptor" evidence="1">
    <location>
        <position position="253"/>
    </location>
</feature>
<name>LPXD_BURP0</name>